<protein>
    <recommendedName>
        <fullName evidence="1">Ornithine aminotransferase 1</fullName>
        <shortName evidence="1">OAT 1</shortName>
        <ecNumber evidence="1">2.6.1.13</ecNumber>
    </recommendedName>
    <alternativeName>
        <fullName evidence="1">Ornithine--oxo-acid aminotransferase 1</fullName>
    </alternativeName>
</protein>
<proteinExistence type="inferred from homology"/>
<name>OAT1_STAS1</name>
<dbReference type="EC" id="2.6.1.13" evidence="1"/>
<dbReference type="EMBL" id="AP008934">
    <property type="protein sequence ID" value="BAE17365.1"/>
    <property type="molecule type" value="Genomic_DNA"/>
</dbReference>
<dbReference type="RefSeq" id="WP_011302212.1">
    <property type="nucleotide sequence ID" value="NC_007350.1"/>
</dbReference>
<dbReference type="SMR" id="Q4A0N2"/>
<dbReference type="GeneID" id="3617138"/>
<dbReference type="KEGG" id="ssp:SSP0220"/>
<dbReference type="PATRIC" id="fig|342451.11.peg.225"/>
<dbReference type="eggNOG" id="COG4992">
    <property type="taxonomic scope" value="Bacteria"/>
</dbReference>
<dbReference type="HOGENOM" id="CLU_016922_10_1_9"/>
<dbReference type="OrthoDB" id="9807885at2"/>
<dbReference type="UniPathway" id="UPA00098">
    <property type="reaction ID" value="UER00358"/>
</dbReference>
<dbReference type="Proteomes" id="UP000006371">
    <property type="component" value="Chromosome"/>
</dbReference>
<dbReference type="GO" id="GO:0005737">
    <property type="term" value="C:cytoplasm"/>
    <property type="evidence" value="ECO:0007669"/>
    <property type="project" value="UniProtKB-SubCell"/>
</dbReference>
<dbReference type="GO" id="GO:0042802">
    <property type="term" value="F:identical protein binding"/>
    <property type="evidence" value="ECO:0007669"/>
    <property type="project" value="TreeGrafter"/>
</dbReference>
<dbReference type="GO" id="GO:0004587">
    <property type="term" value="F:ornithine aminotransferase activity"/>
    <property type="evidence" value="ECO:0007669"/>
    <property type="project" value="UniProtKB-UniRule"/>
</dbReference>
<dbReference type="GO" id="GO:0030170">
    <property type="term" value="F:pyridoxal phosphate binding"/>
    <property type="evidence" value="ECO:0007669"/>
    <property type="project" value="UniProtKB-UniRule"/>
</dbReference>
<dbReference type="GO" id="GO:0006525">
    <property type="term" value="P:arginine metabolic process"/>
    <property type="evidence" value="ECO:0007669"/>
    <property type="project" value="InterPro"/>
</dbReference>
<dbReference type="GO" id="GO:0055129">
    <property type="term" value="P:L-proline biosynthetic process"/>
    <property type="evidence" value="ECO:0007669"/>
    <property type="project" value="UniProtKB-UniRule"/>
</dbReference>
<dbReference type="CDD" id="cd00610">
    <property type="entry name" value="OAT_like"/>
    <property type="match status" value="1"/>
</dbReference>
<dbReference type="FunFam" id="3.40.640.10:FF:000011">
    <property type="entry name" value="Ornithine aminotransferase"/>
    <property type="match status" value="1"/>
</dbReference>
<dbReference type="Gene3D" id="3.90.1150.10">
    <property type="entry name" value="Aspartate Aminotransferase, domain 1"/>
    <property type="match status" value="1"/>
</dbReference>
<dbReference type="Gene3D" id="3.40.640.10">
    <property type="entry name" value="Type I PLP-dependent aspartate aminotransferase-like (Major domain)"/>
    <property type="match status" value="1"/>
</dbReference>
<dbReference type="HAMAP" id="MF_01689">
    <property type="entry name" value="Ornith_aminotrans_3"/>
    <property type="match status" value="1"/>
</dbReference>
<dbReference type="InterPro" id="IPR004636">
    <property type="entry name" value="AcOrn/SuccOrn_fam"/>
</dbReference>
<dbReference type="InterPro" id="IPR005814">
    <property type="entry name" value="Aminotrans_3"/>
</dbReference>
<dbReference type="InterPro" id="IPR049704">
    <property type="entry name" value="Aminotrans_3_PPA_site"/>
</dbReference>
<dbReference type="InterPro" id="IPR050103">
    <property type="entry name" value="Class-III_PLP-dep_AT"/>
</dbReference>
<dbReference type="InterPro" id="IPR010164">
    <property type="entry name" value="Orn_aminotrans"/>
</dbReference>
<dbReference type="InterPro" id="IPR034757">
    <property type="entry name" value="Ornith_aminotrans_bact"/>
</dbReference>
<dbReference type="InterPro" id="IPR015424">
    <property type="entry name" value="PyrdxlP-dep_Trfase"/>
</dbReference>
<dbReference type="InterPro" id="IPR015421">
    <property type="entry name" value="PyrdxlP-dep_Trfase_major"/>
</dbReference>
<dbReference type="InterPro" id="IPR015422">
    <property type="entry name" value="PyrdxlP-dep_Trfase_small"/>
</dbReference>
<dbReference type="NCBIfam" id="TIGR00707">
    <property type="entry name" value="argD"/>
    <property type="match status" value="1"/>
</dbReference>
<dbReference type="NCBIfam" id="TIGR01885">
    <property type="entry name" value="Orn_aminotrans"/>
    <property type="match status" value="1"/>
</dbReference>
<dbReference type="NCBIfam" id="NF002325">
    <property type="entry name" value="PRK01278.1"/>
    <property type="match status" value="1"/>
</dbReference>
<dbReference type="PANTHER" id="PTHR11986">
    <property type="entry name" value="AMINOTRANSFERASE CLASS III"/>
    <property type="match status" value="1"/>
</dbReference>
<dbReference type="PANTHER" id="PTHR11986:SF18">
    <property type="entry name" value="ORNITHINE AMINOTRANSFERASE, MITOCHONDRIAL"/>
    <property type="match status" value="1"/>
</dbReference>
<dbReference type="Pfam" id="PF00202">
    <property type="entry name" value="Aminotran_3"/>
    <property type="match status" value="1"/>
</dbReference>
<dbReference type="PIRSF" id="PIRSF000521">
    <property type="entry name" value="Transaminase_4ab_Lys_Orn"/>
    <property type="match status" value="1"/>
</dbReference>
<dbReference type="SUPFAM" id="SSF53383">
    <property type="entry name" value="PLP-dependent transferases"/>
    <property type="match status" value="1"/>
</dbReference>
<dbReference type="PROSITE" id="PS00600">
    <property type="entry name" value="AA_TRANSFER_CLASS_3"/>
    <property type="match status" value="1"/>
</dbReference>
<gene>
    <name evidence="1" type="primary">rocD1</name>
    <name type="ordered locus">SSP0220</name>
</gene>
<organism>
    <name type="scientific">Staphylococcus saprophyticus subsp. saprophyticus (strain ATCC 15305 / DSM 20229 / NCIMB 8711 / NCTC 7292 / S-41)</name>
    <dbReference type="NCBI Taxonomy" id="342451"/>
    <lineage>
        <taxon>Bacteria</taxon>
        <taxon>Bacillati</taxon>
        <taxon>Bacillota</taxon>
        <taxon>Bacilli</taxon>
        <taxon>Bacillales</taxon>
        <taxon>Staphylococcaceae</taxon>
        <taxon>Staphylococcus</taxon>
    </lineage>
</organism>
<reference key="1">
    <citation type="journal article" date="2005" name="Proc. Natl. Acad. Sci. U.S.A.">
        <title>Whole genome sequence of Staphylococcus saprophyticus reveals the pathogenesis of uncomplicated urinary tract infection.</title>
        <authorList>
            <person name="Kuroda M."/>
            <person name="Yamashita A."/>
            <person name="Hirakawa H."/>
            <person name="Kumano M."/>
            <person name="Morikawa K."/>
            <person name="Higashide M."/>
            <person name="Maruyama A."/>
            <person name="Inose Y."/>
            <person name="Matoba K."/>
            <person name="Toh H."/>
            <person name="Kuhara S."/>
            <person name="Hattori M."/>
            <person name="Ohta T."/>
        </authorList>
    </citation>
    <scope>NUCLEOTIDE SEQUENCE [LARGE SCALE GENOMIC DNA]</scope>
    <source>
        <strain>ATCC 15305 / DSM 20229 / NCIMB 8711 / NCTC 7292 / S-41</strain>
    </source>
</reference>
<keyword id="KW-0028">Amino-acid biosynthesis</keyword>
<keyword id="KW-0032">Aminotransferase</keyword>
<keyword id="KW-0963">Cytoplasm</keyword>
<keyword id="KW-0641">Proline biosynthesis</keyword>
<keyword id="KW-0663">Pyridoxal phosphate</keyword>
<keyword id="KW-1185">Reference proteome</keyword>
<keyword id="KW-0808">Transferase</keyword>
<evidence type="ECO:0000255" key="1">
    <source>
        <dbReference type="HAMAP-Rule" id="MF_01689"/>
    </source>
</evidence>
<comment type="function">
    <text evidence="1">Catalyzes the interconversion of ornithine to glutamate semialdehyde.</text>
</comment>
<comment type="catalytic activity">
    <reaction evidence="1">
        <text>a 2-oxocarboxylate + L-ornithine = L-glutamate 5-semialdehyde + an L-alpha-amino acid</text>
        <dbReference type="Rhea" id="RHEA:13877"/>
        <dbReference type="ChEBI" id="CHEBI:35179"/>
        <dbReference type="ChEBI" id="CHEBI:46911"/>
        <dbReference type="ChEBI" id="CHEBI:58066"/>
        <dbReference type="ChEBI" id="CHEBI:59869"/>
        <dbReference type="EC" id="2.6.1.13"/>
    </reaction>
</comment>
<comment type="cofactor">
    <cofactor evidence="1">
        <name>pyridoxal 5'-phosphate</name>
        <dbReference type="ChEBI" id="CHEBI:597326"/>
    </cofactor>
</comment>
<comment type="pathway">
    <text evidence="1">Amino-acid biosynthesis; L-proline biosynthesis; L-glutamate 5-semialdehyde from L-ornithine: step 1/1.</text>
</comment>
<comment type="subcellular location">
    <subcellularLocation>
        <location evidence="1">Cytoplasm</location>
    </subcellularLocation>
</comment>
<comment type="similarity">
    <text evidence="1">Belongs to the class-III pyridoxal-phosphate-dependent aminotransferase family. OAT subfamily.</text>
</comment>
<feature type="chain" id="PRO_0000112796" description="Ornithine aminotransferase 1">
    <location>
        <begin position="1"/>
        <end position="394"/>
    </location>
</feature>
<feature type="modified residue" description="N6-(pyridoxal phosphate)lysine" evidence="1">
    <location>
        <position position="252"/>
    </location>
</feature>
<sequence length="394" mass="43538">MLDLYEHTDKYSSKNYSPLKLALAKGRGAKVWDIEDNCYIDCISGFSVVNQGHCHPKIIKALQEQSQRITMVSRALYSDNLGKWEEKICKLANKENVLPMNTGTEAVETAIKMARKWGADIKNIDESSSEIIAMNGNFHGRTLGSLSLSSQDSYKKGFGPLLNNIHYADFGDIEQLKKLINNQTTAIILEPIQGEGGVNIPPTHFIQEVRQLCNEYNVLLIADEIQVGLGRTGKMFAMEWENTEPDIYLLGKSLGGGLYPISAVLANQDVMSVLTPGTHGSTFGGNPLACAVSMAALDVLNEEHLVQNALDLGDRLLKHLQQIESELIVEVRGRGLFIGIELNVAAQDYCEQMINKGVLCKETQGNIIRIAPPLVIDKDEIDEVIRVITEVLEK</sequence>
<accession>Q4A0N2</accession>